<protein>
    <recommendedName>
        <fullName evidence="1">Porphobilinogen deaminase</fullName>
        <shortName evidence="1">PBG</shortName>
        <ecNumber evidence="1">2.5.1.61</ecNumber>
    </recommendedName>
    <alternativeName>
        <fullName evidence="1">Hydroxymethylbilane synthase</fullName>
        <shortName evidence="1">HMBS</shortName>
    </alternativeName>
    <alternativeName>
        <fullName evidence="1">Pre-uroporphyrinogen synthase</fullName>
    </alternativeName>
</protein>
<reference key="1">
    <citation type="journal article" date="2007" name="J. Bacteriol.">
        <title>The complete genome sequence of Bacillus thuringiensis Al Hakam.</title>
        <authorList>
            <person name="Challacombe J.F."/>
            <person name="Altherr M.R."/>
            <person name="Xie G."/>
            <person name="Bhotika S.S."/>
            <person name="Brown N."/>
            <person name="Bruce D."/>
            <person name="Campbell C.S."/>
            <person name="Campbell M.L."/>
            <person name="Chen J."/>
            <person name="Chertkov O."/>
            <person name="Cleland C."/>
            <person name="Dimitrijevic M."/>
            <person name="Doggett N.A."/>
            <person name="Fawcett J.J."/>
            <person name="Glavina T."/>
            <person name="Goodwin L.A."/>
            <person name="Green L.D."/>
            <person name="Han C.S."/>
            <person name="Hill K.K."/>
            <person name="Hitchcock P."/>
            <person name="Jackson P.J."/>
            <person name="Keim P."/>
            <person name="Kewalramani A.R."/>
            <person name="Longmire J."/>
            <person name="Lucas S."/>
            <person name="Malfatti S."/>
            <person name="Martinez D."/>
            <person name="McMurry K."/>
            <person name="Meincke L.J."/>
            <person name="Misra M."/>
            <person name="Moseman B.L."/>
            <person name="Mundt M."/>
            <person name="Munk A.C."/>
            <person name="Okinaka R.T."/>
            <person name="Parson-Quintana B."/>
            <person name="Reilly L.P."/>
            <person name="Richardson P."/>
            <person name="Robinson D.L."/>
            <person name="Saunders E."/>
            <person name="Tapia R."/>
            <person name="Tesmer J.G."/>
            <person name="Thayer N."/>
            <person name="Thompson L.S."/>
            <person name="Tice H."/>
            <person name="Ticknor L.O."/>
            <person name="Wills P.L."/>
            <person name="Gilna P."/>
            <person name="Brettin T.S."/>
        </authorList>
    </citation>
    <scope>NUCLEOTIDE SEQUENCE [LARGE SCALE GENOMIC DNA]</scope>
    <source>
        <strain>Al Hakam</strain>
    </source>
</reference>
<organism>
    <name type="scientific">Bacillus thuringiensis (strain Al Hakam)</name>
    <dbReference type="NCBI Taxonomy" id="412694"/>
    <lineage>
        <taxon>Bacteria</taxon>
        <taxon>Bacillati</taxon>
        <taxon>Bacillota</taxon>
        <taxon>Bacilli</taxon>
        <taxon>Bacillales</taxon>
        <taxon>Bacillaceae</taxon>
        <taxon>Bacillus</taxon>
        <taxon>Bacillus cereus group</taxon>
    </lineage>
</organism>
<evidence type="ECO:0000255" key="1">
    <source>
        <dbReference type="HAMAP-Rule" id="MF_00260"/>
    </source>
</evidence>
<keyword id="KW-0627">Porphyrin biosynthesis</keyword>
<keyword id="KW-0808">Transferase</keyword>
<name>HEM3_BACAH</name>
<feature type="chain" id="PRO_0000304213" description="Porphobilinogen deaminase">
    <location>
        <begin position="1"/>
        <end position="309"/>
    </location>
</feature>
<feature type="modified residue" description="S-(dipyrrolylmethanemethyl)cysteine" evidence="1">
    <location>
        <position position="241"/>
    </location>
</feature>
<dbReference type="EC" id="2.5.1.61" evidence="1"/>
<dbReference type="EMBL" id="CP000485">
    <property type="protein sequence ID" value="ABK87274.1"/>
    <property type="molecule type" value="Genomic_DNA"/>
</dbReference>
<dbReference type="RefSeq" id="WP_001226419.1">
    <property type="nucleotide sequence ID" value="NC_008600.1"/>
</dbReference>
<dbReference type="SMR" id="A0RJ81"/>
<dbReference type="KEGG" id="btl:BALH_4057"/>
<dbReference type="HOGENOM" id="CLU_019704_0_2_9"/>
<dbReference type="UniPathway" id="UPA00251">
    <property type="reaction ID" value="UER00319"/>
</dbReference>
<dbReference type="GO" id="GO:0005737">
    <property type="term" value="C:cytoplasm"/>
    <property type="evidence" value="ECO:0007669"/>
    <property type="project" value="TreeGrafter"/>
</dbReference>
<dbReference type="GO" id="GO:0004418">
    <property type="term" value="F:hydroxymethylbilane synthase activity"/>
    <property type="evidence" value="ECO:0007669"/>
    <property type="project" value="UniProtKB-UniRule"/>
</dbReference>
<dbReference type="GO" id="GO:0006782">
    <property type="term" value="P:protoporphyrinogen IX biosynthetic process"/>
    <property type="evidence" value="ECO:0007669"/>
    <property type="project" value="UniProtKB-UniRule"/>
</dbReference>
<dbReference type="CDD" id="cd13646">
    <property type="entry name" value="PBP2_EcHMBS_like"/>
    <property type="match status" value="1"/>
</dbReference>
<dbReference type="FunFam" id="3.30.160.40:FF:000001">
    <property type="entry name" value="Porphobilinogen deaminase"/>
    <property type="match status" value="1"/>
</dbReference>
<dbReference type="FunFam" id="3.40.190.10:FF:000004">
    <property type="entry name" value="Porphobilinogen deaminase"/>
    <property type="match status" value="1"/>
</dbReference>
<dbReference type="FunFam" id="3.40.190.10:FF:000005">
    <property type="entry name" value="Porphobilinogen deaminase"/>
    <property type="match status" value="1"/>
</dbReference>
<dbReference type="Gene3D" id="3.40.190.10">
    <property type="entry name" value="Periplasmic binding protein-like II"/>
    <property type="match status" value="2"/>
</dbReference>
<dbReference type="Gene3D" id="3.30.160.40">
    <property type="entry name" value="Porphobilinogen deaminase, C-terminal domain"/>
    <property type="match status" value="1"/>
</dbReference>
<dbReference type="HAMAP" id="MF_00260">
    <property type="entry name" value="Porphobil_deam"/>
    <property type="match status" value="1"/>
</dbReference>
<dbReference type="InterPro" id="IPR000860">
    <property type="entry name" value="HemC"/>
</dbReference>
<dbReference type="InterPro" id="IPR022419">
    <property type="entry name" value="Porphobilin_deaminase_cofac_BS"/>
</dbReference>
<dbReference type="InterPro" id="IPR022417">
    <property type="entry name" value="Porphobilin_deaminase_N"/>
</dbReference>
<dbReference type="InterPro" id="IPR022418">
    <property type="entry name" value="Porphobilinogen_deaminase_C"/>
</dbReference>
<dbReference type="InterPro" id="IPR036803">
    <property type="entry name" value="Porphobilinogen_deaminase_C_sf"/>
</dbReference>
<dbReference type="NCBIfam" id="TIGR00212">
    <property type="entry name" value="hemC"/>
    <property type="match status" value="1"/>
</dbReference>
<dbReference type="PANTHER" id="PTHR11557">
    <property type="entry name" value="PORPHOBILINOGEN DEAMINASE"/>
    <property type="match status" value="1"/>
</dbReference>
<dbReference type="PANTHER" id="PTHR11557:SF0">
    <property type="entry name" value="PORPHOBILINOGEN DEAMINASE"/>
    <property type="match status" value="1"/>
</dbReference>
<dbReference type="Pfam" id="PF01379">
    <property type="entry name" value="Porphobil_deam"/>
    <property type="match status" value="1"/>
</dbReference>
<dbReference type="Pfam" id="PF03900">
    <property type="entry name" value="Porphobil_deamC"/>
    <property type="match status" value="1"/>
</dbReference>
<dbReference type="PIRSF" id="PIRSF001438">
    <property type="entry name" value="4pyrrol_synth_OHMeBilane_synth"/>
    <property type="match status" value="1"/>
</dbReference>
<dbReference type="PRINTS" id="PR00151">
    <property type="entry name" value="PORPHBDMNASE"/>
</dbReference>
<dbReference type="SUPFAM" id="SSF53850">
    <property type="entry name" value="Periplasmic binding protein-like II"/>
    <property type="match status" value="1"/>
</dbReference>
<dbReference type="SUPFAM" id="SSF54782">
    <property type="entry name" value="Porphobilinogen deaminase (hydroxymethylbilane synthase), C-terminal domain"/>
    <property type="match status" value="1"/>
</dbReference>
<dbReference type="PROSITE" id="PS00533">
    <property type="entry name" value="PORPHOBILINOGEN_DEAM"/>
    <property type="match status" value="1"/>
</dbReference>
<proteinExistence type="inferred from homology"/>
<accession>A0RJ81</accession>
<sequence>MRKIIVGSRKSKLALTQTNWFIDQLKALGLPYEFEVKEIVTKGDVILDVTLSKVGGKGLFVKEIEHALLTKEIDMAVHSMKDMPAVLPEGLMIGCTPKRVDPRDAFISKSGASFKELAEGAILGTSSLRRSAQLLAARPDLQVKWIRGNIDTRLRKLKEEDYDAIILATAGLQRMGWDNEVITEHLDETLCVPAVGQGALAIECREDDKDLLQLLAHINDAVTEKTVAAERVFLHKLEGGCQVPIAGYATLTENDAIELTALVGSMDGSVLLKETVVGTDPEKVGLEAADRLIKQGAKELILAANKGQQ</sequence>
<gene>
    <name evidence="1" type="primary">hemC</name>
    <name type="ordered locus">BALH_4057</name>
</gene>
<comment type="function">
    <text evidence="1">Tetrapolymerization of the monopyrrole PBG into the hydroxymethylbilane pre-uroporphyrinogen in several discrete steps.</text>
</comment>
<comment type="catalytic activity">
    <reaction evidence="1">
        <text>4 porphobilinogen + H2O = hydroxymethylbilane + 4 NH4(+)</text>
        <dbReference type="Rhea" id="RHEA:13185"/>
        <dbReference type="ChEBI" id="CHEBI:15377"/>
        <dbReference type="ChEBI" id="CHEBI:28938"/>
        <dbReference type="ChEBI" id="CHEBI:57845"/>
        <dbReference type="ChEBI" id="CHEBI:58126"/>
        <dbReference type="EC" id="2.5.1.61"/>
    </reaction>
</comment>
<comment type="cofactor">
    <cofactor evidence="1">
        <name>dipyrromethane</name>
        <dbReference type="ChEBI" id="CHEBI:60342"/>
    </cofactor>
    <text evidence="1">Binds 1 dipyrromethane group covalently.</text>
</comment>
<comment type="pathway">
    <text evidence="1">Porphyrin-containing compound metabolism; protoporphyrin-IX biosynthesis; coproporphyrinogen-III from 5-aminolevulinate: step 2/4.</text>
</comment>
<comment type="subunit">
    <text evidence="1">Monomer.</text>
</comment>
<comment type="miscellaneous">
    <text evidence="1">The porphobilinogen subunits are added to the dipyrromethane group.</text>
</comment>
<comment type="similarity">
    <text evidence="1">Belongs to the HMBS family.</text>
</comment>